<evidence type="ECO:0000255" key="1">
    <source>
        <dbReference type="HAMAP-Rule" id="MF_01373"/>
    </source>
</evidence>
<evidence type="ECO:0000256" key="2">
    <source>
        <dbReference type="SAM" id="MobiDB-lite"/>
    </source>
</evidence>
<organism>
    <name type="scientific">Corynebacterium jeikeium (strain K411)</name>
    <dbReference type="NCBI Taxonomy" id="306537"/>
    <lineage>
        <taxon>Bacteria</taxon>
        <taxon>Bacillati</taxon>
        <taxon>Actinomycetota</taxon>
        <taxon>Actinomycetes</taxon>
        <taxon>Mycobacteriales</taxon>
        <taxon>Corynebacteriaceae</taxon>
        <taxon>Corynebacterium</taxon>
    </lineage>
</organism>
<keyword id="KW-1003">Cell membrane</keyword>
<keyword id="KW-0449">Lipoprotein</keyword>
<keyword id="KW-0472">Membrane</keyword>
<keyword id="KW-0564">Palmitate</keyword>
<keyword id="KW-1185">Reference proteome</keyword>
<keyword id="KW-0732">Signal</keyword>
<comment type="subcellular location">
    <subcellularLocation>
        <location evidence="1">Cell membrane</location>
        <topology evidence="1">Lipid-anchor</topology>
    </subcellularLocation>
</comment>
<comment type="similarity">
    <text evidence="1">Belongs to the LpqB lipoprotein family.</text>
</comment>
<sequence length="583" mass="62742">MSNKTTEATKTTKVKKVLSVVAGLGLLAGCSTLPDDTNPEAISSYAPAPSGQEAPTPTDGQPSDLLLRDFFTASAHPLRDHQAAKKFLTGGMQGRWQSDAPTMVLDRIDISSEGPGNDSKITYRVRGNIVGTLGVGGVFDPQYTAFETSYEMQNVDGQWRISNLPNVVVLDRQDFVSTYRARNIYFPDLNGRALVSDRRWIYTGQQSTAASLVSLLVAGPQDRLKKAVRNLVPEDATAQVSNDGGGDPAVHFTGLQELSADARRLLAAQVVWTLAGSEVRGPYELTADGTPMTDDMHGKWLVQDLSQYDPNVQVQTPLRAVSGGDVYQQDGARAKKLEGWLSQQYVESVALSPRDEVYAAVTGRGDAPRQLMIGAKGDQPVSSVQANSLTRPTWGLDATSAYVVADGERITEITRNPESGIVGERKVDSSTMAMVDGKDKRISVFRVSHDGARAVMIVNGRVYVVTLDTTDDGTKRLGAPVEIGHAVGDTAVSADWSDDGSVLVGTRANDAPVWDIEVDGSYSQQITGRNLSAPVVSVATDGSKIYVTDANALMQFDVTSEESRFWREVPTMQGKRATPVLAD</sequence>
<gene>
    <name evidence="1" type="primary">lpqB</name>
    <name type="ordered locus">jk1633</name>
</gene>
<accession>Q4JTP9</accession>
<name>LPQB_CORJK</name>
<dbReference type="EMBL" id="CR931997">
    <property type="protein sequence ID" value="CAI37808.1"/>
    <property type="molecule type" value="Genomic_DNA"/>
</dbReference>
<dbReference type="RefSeq" id="WP_011274018.1">
    <property type="nucleotide sequence ID" value="NC_007164.1"/>
</dbReference>
<dbReference type="SMR" id="Q4JTP9"/>
<dbReference type="STRING" id="306537.jk1633"/>
<dbReference type="KEGG" id="cjk:jk1633"/>
<dbReference type="PATRIC" id="fig|306537.10.peg.1652"/>
<dbReference type="eggNOG" id="COG5401">
    <property type="taxonomic scope" value="Bacteria"/>
</dbReference>
<dbReference type="HOGENOM" id="CLU_032207_1_0_11"/>
<dbReference type="OrthoDB" id="3226781at2"/>
<dbReference type="Proteomes" id="UP000000545">
    <property type="component" value="Chromosome"/>
</dbReference>
<dbReference type="GO" id="GO:0005886">
    <property type="term" value="C:plasma membrane"/>
    <property type="evidence" value="ECO:0007669"/>
    <property type="project" value="UniProtKB-SubCell"/>
</dbReference>
<dbReference type="Gene3D" id="2.120.10.30">
    <property type="entry name" value="TolB, C-terminal domain"/>
    <property type="match status" value="1"/>
</dbReference>
<dbReference type="HAMAP" id="MF_01373">
    <property type="entry name" value="LpqB_lipoprot"/>
    <property type="match status" value="1"/>
</dbReference>
<dbReference type="InterPro" id="IPR011042">
    <property type="entry name" value="6-blade_b-propeller_TolB-like"/>
</dbReference>
<dbReference type="InterPro" id="IPR019606">
    <property type="entry name" value="GerMN"/>
</dbReference>
<dbReference type="InterPro" id="IPR023959">
    <property type="entry name" value="Lipoprotein_LpqB"/>
</dbReference>
<dbReference type="InterPro" id="IPR018910">
    <property type="entry name" value="Lipoprotein_LpqB_C"/>
</dbReference>
<dbReference type="NCBIfam" id="NF010141">
    <property type="entry name" value="PRK13616.1"/>
    <property type="match status" value="1"/>
</dbReference>
<dbReference type="Pfam" id="PF10646">
    <property type="entry name" value="Germane"/>
    <property type="match status" value="1"/>
</dbReference>
<dbReference type="Pfam" id="PF10647">
    <property type="entry name" value="Gmad1"/>
    <property type="match status" value="1"/>
</dbReference>
<dbReference type="SMART" id="SM00909">
    <property type="entry name" value="Germane"/>
    <property type="match status" value="1"/>
</dbReference>
<dbReference type="SUPFAM" id="SSF82171">
    <property type="entry name" value="DPP6 N-terminal domain-like"/>
    <property type="match status" value="1"/>
</dbReference>
<dbReference type="PROSITE" id="PS51257">
    <property type="entry name" value="PROKAR_LIPOPROTEIN"/>
    <property type="match status" value="1"/>
</dbReference>
<reference key="1">
    <citation type="journal article" date="2005" name="J. Bacteriol.">
        <title>Complete genome sequence and analysis of the multiresistant nosocomial pathogen Corynebacterium jeikeium K411, a lipid-requiring bacterium of the human skin flora.</title>
        <authorList>
            <person name="Tauch A."/>
            <person name="Kaiser O."/>
            <person name="Hain T."/>
            <person name="Goesmann A."/>
            <person name="Weisshaar B."/>
            <person name="Albersmeier A."/>
            <person name="Bekel T."/>
            <person name="Bischoff N."/>
            <person name="Brune I."/>
            <person name="Chakraborty T."/>
            <person name="Kalinowski J."/>
            <person name="Meyer F."/>
            <person name="Rupp O."/>
            <person name="Schneiker S."/>
            <person name="Viehoever P."/>
            <person name="Puehler A."/>
        </authorList>
    </citation>
    <scope>NUCLEOTIDE SEQUENCE [LARGE SCALE GENOMIC DNA]</scope>
    <source>
        <strain>K411</strain>
    </source>
</reference>
<feature type="signal peptide" evidence="1">
    <location>
        <begin position="1"/>
        <end position="29"/>
    </location>
</feature>
<feature type="chain" id="PRO_0000286717" description="Lipoprotein LpqB">
    <location>
        <begin position="30"/>
        <end position="583"/>
    </location>
</feature>
<feature type="region of interest" description="Disordered" evidence="2">
    <location>
        <begin position="38"/>
        <end position="63"/>
    </location>
</feature>
<feature type="lipid moiety-binding region" description="N-palmitoyl cysteine" evidence="1">
    <location>
        <position position="30"/>
    </location>
</feature>
<feature type="lipid moiety-binding region" description="S-diacylglycerol cysteine" evidence="1">
    <location>
        <position position="30"/>
    </location>
</feature>
<protein>
    <recommendedName>
        <fullName evidence="1">Lipoprotein LpqB</fullName>
    </recommendedName>
</protein>
<proteinExistence type="inferred from homology"/>